<reference key="1">
    <citation type="journal article" date="2007" name="Mol. Biol. Evol.">
        <title>Chloroplast genome (cpDNA) of Cycas taitungensis and 56 cp protein-coding genes of Gnetum parvifolium: insights into cpDNA evolution and phylogeny of extant seed plants.</title>
        <authorList>
            <person name="Wu C.-S."/>
            <person name="Wang Y.-N."/>
            <person name="Liu S.-M."/>
            <person name="Chaw S.-M."/>
        </authorList>
    </citation>
    <scope>NUCLEOTIDE SEQUENCE [LARGE SCALE GENOMIC DNA]</scope>
</reference>
<reference key="2">
    <citation type="journal article" date="2009" name="Mol. Phylogenet. Evol.">
        <title>Evolution of reduced and compact chloroplast genomes (cpDNAs) in gnetophytes: Selection toward a lower-cost strategy.</title>
        <authorList>
            <person name="Wu C.-S."/>
            <person name="Lai Y.-T."/>
            <person name="Lin C.-P."/>
            <person name="Wang Y.-N."/>
            <person name="Chaw S.-M."/>
        </authorList>
    </citation>
    <scope>NUCLEOTIDE SEQUENCE [LARGE SCALE GENOMIC DNA]</scope>
</reference>
<gene>
    <name evidence="1" type="primary">psaB</name>
</gene>
<feature type="chain" id="PRO_0000300045" description="Photosystem I P700 chlorophyll a apoprotein A2">
    <location>
        <begin position="1"/>
        <end position="734"/>
    </location>
</feature>
<feature type="transmembrane region" description="Helical; Name=I" evidence="1">
    <location>
        <begin position="46"/>
        <end position="69"/>
    </location>
</feature>
<feature type="transmembrane region" description="Helical; Name=II" evidence="1">
    <location>
        <begin position="135"/>
        <end position="158"/>
    </location>
</feature>
<feature type="transmembrane region" description="Helical; Name=III" evidence="1">
    <location>
        <begin position="175"/>
        <end position="199"/>
    </location>
</feature>
<feature type="transmembrane region" description="Helical; Name=IV" evidence="1">
    <location>
        <begin position="273"/>
        <end position="291"/>
    </location>
</feature>
<feature type="transmembrane region" description="Helical; Name=V" evidence="1">
    <location>
        <begin position="330"/>
        <end position="353"/>
    </location>
</feature>
<feature type="transmembrane region" description="Helical; Name=VI" evidence="1">
    <location>
        <begin position="369"/>
        <end position="395"/>
    </location>
</feature>
<feature type="transmembrane region" description="Helical; Name=VII" evidence="1">
    <location>
        <begin position="417"/>
        <end position="439"/>
    </location>
</feature>
<feature type="transmembrane region" description="Helical; Name=VIII" evidence="1">
    <location>
        <begin position="517"/>
        <end position="535"/>
    </location>
</feature>
<feature type="transmembrane region" description="Helical; Name=IX" evidence="1">
    <location>
        <begin position="575"/>
        <end position="596"/>
    </location>
</feature>
<feature type="transmembrane region" description="Helical; Name=X" evidence="1">
    <location>
        <begin position="643"/>
        <end position="665"/>
    </location>
</feature>
<feature type="transmembrane region" description="Helical; Name=XI" evidence="1">
    <location>
        <begin position="707"/>
        <end position="727"/>
    </location>
</feature>
<feature type="binding site" evidence="1">
    <location>
        <position position="559"/>
    </location>
    <ligand>
        <name>[4Fe-4S] cluster</name>
        <dbReference type="ChEBI" id="CHEBI:49883"/>
        <note>ligand shared between dimeric partners</note>
    </ligand>
</feature>
<feature type="binding site" evidence="1">
    <location>
        <position position="568"/>
    </location>
    <ligand>
        <name>[4Fe-4S] cluster</name>
        <dbReference type="ChEBI" id="CHEBI:49883"/>
        <note>ligand shared between dimeric partners</note>
    </ligand>
</feature>
<feature type="binding site" description="axial binding residue" evidence="1">
    <location>
        <position position="654"/>
    </location>
    <ligand>
        <name>chlorophyll a</name>
        <dbReference type="ChEBI" id="CHEBI:58416"/>
        <label>B1</label>
    </ligand>
    <ligandPart>
        <name>Mg</name>
        <dbReference type="ChEBI" id="CHEBI:25107"/>
    </ligandPart>
</feature>
<feature type="binding site" description="axial binding residue" evidence="1">
    <location>
        <position position="662"/>
    </location>
    <ligand>
        <name>chlorophyll a</name>
        <dbReference type="ChEBI" id="CHEBI:58416"/>
        <label>B3</label>
    </ligand>
    <ligandPart>
        <name>Mg</name>
        <dbReference type="ChEBI" id="CHEBI:25107"/>
    </ligandPart>
</feature>
<feature type="binding site" evidence="1">
    <location>
        <position position="670"/>
    </location>
    <ligand>
        <name>chlorophyll a</name>
        <dbReference type="ChEBI" id="CHEBI:58416"/>
        <label>B3</label>
    </ligand>
</feature>
<feature type="binding site" evidence="1">
    <location>
        <position position="671"/>
    </location>
    <ligand>
        <name>phylloquinone</name>
        <dbReference type="ChEBI" id="CHEBI:18067"/>
        <label>B</label>
    </ligand>
</feature>
<organism>
    <name type="scientific">Gnetum parvifolium</name>
    <name type="common">Small-leaved jointfir</name>
    <name type="synonym">Gnetum scandens var. parvifolium</name>
    <dbReference type="NCBI Taxonomy" id="33153"/>
    <lineage>
        <taxon>Eukaryota</taxon>
        <taxon>Viridiplantae</taxon>
        <taxon>Streptophyta</taxon>
        <taxon>Embryophyta</taxon>
        <taxon>Tracheophyta</taxon>
        <taxon>Spermatophyta</taxon>
        <taxon>Gnetopsida</taxon>
        <taxon>Gnetidae</taxon>
        <taxon>Gnetales</taxon>
        <taxon>Gnetaceae</taxon>
        <taxon>Gnetum</taxon>
    </lineage>
</organism>
<proteinExistence type="inferred from homology"/>
<comment type="function">
    <text evidence="1">PsaA and PsaB bind P700, the primary electron donor of photosystem I (PSI), as well as the electron acceptors A0, A1 and FX. PSI is a plastocyanin-ferredoxin oxidoreductase, converting photonic excitation into a charge separation, which transfers an electron from the donor P700 chlorophyll pair to the spectroscopically characterized acceptors A0, A1, FX, FA and FB in turn. Oxidized P700 is reduced on the lumenal side of the thylakoid membrane by plastocyanin.</text>
</comment>
<comment type="catalytic activity">
    <reaction evidence="1">
        <text>reduced [plastocyanin] + hnu + oxidized [2Fe-2S]-[ferredoxin] = oxidized [plastocyanin] + reduced [2Fe-2S]-[ferredoxin]</text>
        <dbReference type="Rhea" id="RHEA:30407"/>
        <dbReference type="Rhea" id="RHEA-COMP:10000"/>
        <dbReference type="Rhea" id="RHEA-COMP:10001"/>
        <dbReference type="Rhea" id="RHEA-COMP:10039"/>
        <dbReference type="Rhea" id="RHEA-COMP:10040"/>
        <dbReference type="ChEBI" id="CHEBI:29036"/>
        <dbReference type="ChEBI" id="CHEBI:30212"/>
        <dbReference type="ChEBI" id="CHEBI:33737"/>
        <dbReference type="ChEBI" id="CHEBI:33738"/>
        <dbReference type="ChEBI" id="CHEBI:49552"/>
        <dbReference type="EC" id="1.97.1.12"/>
    </reaction>
</comment>
<comment type="cofactor">
    <text evidence="1">P700 is a chlorophyll a/chlorophyll a' dimer, A0 is one or more chlorophyll a, A1 is one or both phylloquinones and FX is a shared 4Fe-4S iron-sulfur center.</text>
</comment>
<comment type="subunit">
    <text evidence="1">The PsaA/B heterodimer binds the P700 chlorophyll special pair and subsequent electron acceptors. PSI consists of a core antenna complex that captures photons, and an electron transfer chain that converts photonic excitation into a charge separation. The eukaryotic PSI reaction center is composed of at least 11 subunits.</text>
</comment>
<comment type="subcellular location">
    <subcellularLocation>
        <location evidence="1">Plastid</location>
        <location evidence="1">Chloroplast thylakoid membrane</location>
        <topology evidence="1">Multi-pass membrane protein</topology>
    </subcellularLocation>
</comment>
<comment type="similarity">
    <text evidence="1">Belongs to the PsaA/PsaB family.</text>
</comment>
<protein>
    <recommendedName>
        <fullName evidence="1">Photosystem I P700 chlorophyll a apoprotein A2</fullName>
        <ecNumber evidence="1">1.97.1.12</ecNumber>
    </recommendedName>
    <alternativeName>
        <fullName evidence="1">PSI-B</fullName>
    </alternativeName>
    <alternativeName>
        <fullName evidence="1">PsaB</fullName>
    </alternativeName>
</protein>
<sequence>MASRFPKFSQGLAQDPTTRRIWFGIATAHDFESHDDITEERLYQQIFASHFGQLAIIFLWTSGNLFHVAWQGNFETWVNDPLHIRPIAHAIWDPHFGQPAIEAFTRGGAPGPVNIAYSGVYQWWYTIGLRTNEDLYIGALFLMFCSALFLIAGRLHLQPKRKPSVSWFKNAESRLNHHLSGLFGVSSLAWTGHLVHVALPESRGIHVRWTNFLNVLPYPQGLGPLFGGQWILYSQNPDSSSHLFGTSEGAGTAILTLLGGFHPQTQSLWLTDIAHHHLAIALVFLIAGHMYRTNFGIGHSIKDILEAHTPPGGFLGRGHKSLYNTINNSLHFQLGLALASLGVVTSLVAQHMYSLPAYAFIAQDFTTQAALYTHHQYIAGFIMTGAFAHGAIFFIRDYNPEQNKDNVLARMLEHKEAIISHLSWASLFLGFHTLGLYVHNDVMLAFGTPEKQILIEPIFAQWIQSAHGKSFYGFDVLLASTKDPAFVAGKSLWLPGWLKAVNDNKNSLFLTIGPGDFLVHHAIALGLHTTTLILVKGALDARGSKLMPDKKDFGYSFPCDGPGRGGTCDISAWDAFYLAVFWMLNTVGWVTFYWHWKHITLWQGNAAQFNESSTYLMGWLRDYLWLNSSQLINGYNPFGMNTLSVWAWMFLFGHLVWATGFMFLISWRGYWQELIETLVWAHERTPLANLVRWKDKPVALSIVQARLVGLVHFSVGYIFTYAAFLIASTSGKFG</sequence>
<dbReference type="EC" id="1.97.1.12" evidence="1"/>
<dbReference type="EMBL" id="AB295920">
    <property type="protein sequence ID" value="BAF64869.1"/>
    <property type="molecule type" value="Genomic_DNA"/>
</dbReference>
<dbReference type="EMBL" id="AP009569">
    <property type="protein sequence ID" value="BAH11304.1"/>
    <property type="molecule type" value="Genomic_DNA"/>
</dbReference>
<dbReference type="RefSeq" id="YP_002519793.1">
    <property type="nucleotide sequence ID" value="NC_011942.1"/>
</dbReference>
<dbReference type="SMR" id="A6BM24"/>
<dbReference type="GeneID" id="7368134"/>
<dbReference type="GO" id="GO:0009535">
    <property type="term" value="C:chloroplast thylakoid membrane"/>
    <property type="evidence" value="ECO:0007669"/>
    <property type="project" value="UniProtKB-SubCell"/>
</dbReference>
<dbReference type="GO" id="GO:0009522">
    <property type="term" value="C:photosystem I"/>
    <property type="evidence" value="ECO:0007669"/>
    <property type="project" value="UniProtKB-KW"/>
</dbReference>
<dbReference type="GO" id="GO:0051539">
    <property type="term" value="F:4 iron, 4 sulfur cluster binding"/>
    <property type="evidence" value="ECO:0007669"/>
    <property type="project" value="UniProtKB-KW"/>
</dbReference>
<dbReference type="GO" id="GO:0016168">
    <property type="term" value="F:chlorophyll binding"/>
    <property type="evidence" value="ECO:0007669"/>
    <property type="project" value="UniProtKB-KW"/>
</dbReference>
<dbReference type="GO" id="GO:0009055">
    <property type="term" value="F:electron transfer activity"/>
    <property type="evidence" value="ECO:0007669"/>
    <property type="project" value="UniProtKB-UniRule"/>
</dbReference>
<dbReference type="GO" id="GO:0000287">
    <property type="term" value="F:magnesium ion binding"/>
    <property type="evidence" value="ECO:0007669"/>
    <property type="project" value="UniProtKB-UniRule"/>
</dbReference>
<dbReference type="GO" id="GO:0016491">
    <property type="term" value="F:oxidoreductase activity"/>
    <property type="evidence" value="ECO:0007669"/>
    <property type="project" value="UniProtKB-KW"/>
</dbReference>
<dbReference type="GO" id="GO:0015979">
    <property type="term" value="P:photosynthesis"/>
    <property type="evidence" value="ECO:0007669"/>
    <property type="project" value="UniProtKB-UniRule"/>
</dbReference>
<dbReference type="FunFam" id="1.20.1130.10:FF:000001">
    <property type="entry name" value="Photosystem I P700 chlorophyll a apoprotein A2"/>
    <property type="match status" value="1"/>
</dbReference>
<dbReference type="Gene3D" id="1.20.1130.10">
    <property type="entry name" value="Photosystem I PsaA/PsaB"/>
    <property type="match status" value="1"/>
</dbReference>
<dbReference type="HAMAP" id="MF_00482">
    <property type="entry name" value="PSI_PsaB"/>
    <property type="match status" value="1"/>
</dbReference>
<dbReference type="InterPro" id="IPR001280">
    <property type="entry name" value="PSI_PsaA/B"/>
</dbReference>
<dbReference type="InterPro" id="IPR020586">
    <property type="entry name" value="PSI_PsaA/B_CS"/>
</dbReference>
<dbReference type="InterPro" id="IPR036408">
    <property type="entry name" value="PSI_PsaA/B_sf"/>
</dbReference>
<dbReference type="InterPro" id="IPR006244">
    <property type="entry name" value="PSI_PsaB"/>
</dbReference>
<dbReference type="NCBIfam" id="TIGR01336">
    <property type="entry name" value="psaB"/>
    <property type="match status" value="1"/>
</dbReference>
<dbReference type="PANTHER" id="PTHR30128">
    <property type="entry name" value="OUTER MEMBRANE PROTEIN, OMPA-RELATED"/>
    <property type="match status" value="1"/>
</dbReference>
<dbReference type="PANTHER" id="PTHR30128:SF19">
    <property type="entry name" value="PHOTOSYSTEM I P700 CHLOROPHYLL A APOPROTEIN A1-RELATED"/>
    <property type="match status" value="1"/>
</dbReference>
<dbReference type="Pfam" id="PF00223">
    <property type="entry name" value="PsaA_PsaB"/>
    <property type="match status" value="1"/>
</dbReference>
<dbReference type="PIRSF" id="PIRSF002905">
    <property type="entry name" value="PSI_A"/>
    <property type="match status" value="1"/>
</dbReference>
<dbReference type="PRINTS" id="PR00257">
    <property type="entry name" value="PHOTSYSPSAAB"/>
</dbReference>
<dbReference type="SUPFAM" id="SSF81558">
    <property type="entry name" value="Photosystem I subunits PsaA/PsaB"/>
    <property type="match status" value="1"/>
</dbReference>
<dbReference type="PROSITE" id="PS00419">
    <property type="entry name" value="PHOTOSYSTEM_I_PSAAB"/>
    <property type="match status" value="1"/>
</dbReference>
<accession>A6BM24</accession>
<accession>B7ZIC4</accession>
<name>PSAB_GNEPA</name>
<evidence type="ECO:0000255" key="1">
    <source>
        <dbReference type="HAMAP-Rule" id="MF_00482"/>
    </source>
</evidence>
<geneLocation type="chloroplast"/>
<keyword id="KW-0004">4Fe-4S</keyword>
<keyword id="KW-0148">Chlorophyll</keyword>
<keyword id="KW-0150">Chloroplast</keyword>
<keyword id="KW-0157">Chromophore</keyword>
<keyword id="KW-0249">Electron transport</keyword>
<keyword id="KW-0408">Iron</keyword>
<keyword id="KW-0411">Iron-sulfur</keyword>
<keyword id="KW-0460">Magnesium</keyword>
<keyword id="KW-0472">Membrane</keyword>
<keyword id="KW-0479">Metal-binding</keyword>
<keyword id="KW-0560">Oxidoreductase</keyword>
<keyword id="KW-0602">Photosynthesis</keyword>
<keyword id="KW-0603">Photosystem I</keyword>
<keyword id="KW-0934">Plastid</keyword>
<keyword id="KW-0793">Thylakoid</keyword>
<keyword id="KW-0812">Transmembrane</keyword>
<keyword id="KW-1133">Transmembrane helix</keyword>
<keyword id="KW-0813">Transport</keyword>